<accession>B1AJH4</accession>
<proteinExistence type="inferred from homology"/>
<reference key="1">
    <citation type="submission" date="2008-02" db="EMBL/GenBank/DDBJ databases">
        <title>Genome sequence of Ureaplasma parvum serovar 3.</title>
        <authorList>
            <person name="Methe B.A."/>
            <person name="Glass J."/>
            <person name="Waites K."/>
            <person name="Shrivastava S."/>
        </authorList>
    </citation>
    <scope>NUCLEOTIDE SEQUENCE [LARGE SCALE GENOMIC DNA]</scope>
    <source>
        <strain>ATCC 27815 / 27 / NCTC 11736</strain>
    </source>
</reference>
<name>RL33_UREP2</name>
<comment type="similarity">
    <text evidence="1">Belongs to the bacterial ribosomal protein bL33 family.</text>
</comment>
<sequence>MAIKRGVRLQCNESKSINYITTKNAKNNPDRLSLNKFCPKCRKVTTHVEIKKK</sequence>
<evidence type="ECO:0000255" key="1">
    <source>
        <dbReference type="HAMAP-Rule" id="MF_00294"/>
    </source>
</evidence>
<evidence type="ECO:0000305" key="2"/>
<gene>
    <name evidence="1" type="primary">rpmG</name>
    <name type="ordered locus">UPA3_0571</name>
</gene>
<protein>
    <recommendedName>
        <fullName evidence="1">Large ribosomal subunit protein bL33</fullName>
    </recommendedName>
    <alternativeName>
        <fullName evidence="2">50S ribosomal protein L33</fullName>
    </alternativeName>
</protein>
<feature type="chain" id="PRO_0000356773" description="Large ribosomal subunit protein bL33">
    <location>
        <begin position="1"/>
        <end position="53"/>
    </location>
</feature>
<dbReference type="EMBL" id="CP000942">
    <property type="protein sequence ID" value="ACA32921.1"/>
    <property type="molecule type" value="Genomic_DNA"/>
</dbReference>
<dbReference type="RefSeq" id="WP_006688661.1">
    <property type="nucleotide sequence ID" value="NC_010503.1"/>
</dbReference>
<dbReference type="SMR" id="B1AJH4"/>
<dbReference type="GeneID" id="29672398"/>
<dbReference type="KEGG" id="upa:UPA3_0571"/>
<dbReference type="HOGENOM" id="CLU_190949_0_2_14"/>
<dbReference type="Proteomes" id="UP000002162">
    <property type="component" value="Chromosome"/>
</dbReference>
<dbReference type="GO" id="GO:0005737">
    <property type="term" value="C:cytoplasm"/>
    <property type="evidence" value="ECO:0007669"/>
    <property type="project" value="UniProtKB-ARBA"/>
</dbReference>
<dbReference type="GO" id="GO:1990904">
    <property type="term" value="C:ribonucleoprotein complex"/>
    <property type="evidence" value="ECO:0007669"/>
    <property type="project" value="UniProtKB-KW"/>
</dbReference>
<dbReference type="GO" id="GO:0005840">
    <property type="term" value="C:ribosome"/>
    <property type="evidence" value="ECO:0007669"/>
    <property type="project" value="UniProtKB-KW"/>
</dbReference>
<dbReference type="GO" id="GO:0003735">
    <property type="term" value="F:structural constituent of ribosome"/>
    <property type="evidence" value="ECO:0007669"/>
    <property type="project" value="InterPro"/>
</dbReference>
<dbReference type="GO" id="GO:0006412">
    <property type="term" value="P:translation"/>
    <property type="evidence" value="ECO:0007669"/>
    <property type="project" value="UniProtKB-UniRule"/>
</dbReference>
<dbReference type="Gene3D" id="2.20.28.120">
    <property type="entry name" value="Ribosomal protein L33"/>
    <property type="match status" value="1"/>
</dbReference>
<dbReference type="HAMAP" id="MF_00294">
    <property type="entry name" value="Ribosomal_bL33"/>
    <property type="match status" value="1"/>
</dbReference>
<dbReference type="InterPro" id="IPR001705">
    <property type="entry name" value="Ribosomal_bL33"/>
</dbReference>
<dbReference type="InterPro" id="IPR018264">
    <property type="entry name" value="Ribosomal_bL33_CS"/>
</dbReference>
<dbReference type="InterPro" id="IPR038584">
    <property type="entry name" value="Ribosomal_bL33_sf"/>
</dbReference>
<dbReference type="InterPro" id="IPR011332">
    <property type="entry name" value="Ribosomal_zn-bd"/>
</dbReference>
<dbReference type="NCBIfam" id="NF001764">
    <property type="entry name" value="PRK00504.1"/>
    <property type="match status" value="1"/>
</dbReference>
<dbReference type="NCBIfam" id="NF001860">
    <property type="entry name" value="PRK00595.1"/>
    <property type="match status" value="1"/>
</dbReference>
<dbReference type="NCBIfam" id="TIGR01023">
    <property type="entry name" value="rpmG_bact"/>
    <property type="match status" value="1"/>
</dbReference>
<dbReference type="PANTHER" id="PTHR43168">
    <property type="entry name" value="50S RIBOSOMAL PROTEIN L33, CHLOROPLASTIC"/>
    <property type="match status" value="1"/>
</dbReference>
<dbReference type="PANTHER" id="PTHR43168:SF6">
    <property type="entry name" value="LARGE RIBOSOMAL SUBUNIT PROTEIN BL33A"/>
    <property type="match status" value="1"/>
</dbReference>
<dbReference type="Pfam" id="PF00471">
    <property type="entry name" value="Ribosomal_L33"/>
    <property type="match status" value="1"/>
</dbReference>
<dbReference type="SUPFAM" id="SSF57829">
    <property type="entry name" value="Zn-binding ribosomal proteins"/>
    <property type="match status" value="1"/>
</dbReference>
<dbReference type="PROSITE" id="PS00582">
    <property type="entry name" value="RIBOSOMAL_L33"/>
    <property type="match status" value="1"/>
</dbReference>
<keyword id="KW-0687">Ribonucleoprotein</keyword>
<keyword id="KW-0689">Ribosomal protein</keyword>
<organism>
    <name type="scientific">Ureaplasma parvum serovar 3 (strain ATCC 27815 / 27 / NCTC 11736)</name>
    <dbReference type="NCBI Taxonomy" id="505682"/>
    <lineage>
        <taxon>Bacteria</taxon>
        <taxon>Bacillati</taxon>
        <taxon>Mycoplasmatota</taxon>
        <taxon>Mycoplasmoidales</taxon>
        <taxon>Mycoplasmoidaceae</taxon>
        <taxon>Ureaplasma</taxon>
    </lineage>
</organism>